<accession>Q6ZMN8</accession>
<accession>B2RNE2</accession>
<accession>B7ZMB7</accession>
<accession>B7ZMB8</accession>
<proteinExistence type="evidence at protein level"/>
<sequence>MASGAQLPPQPSSSEVSAVQSPGGRPGAGLEETALGVPLPPSPGEAPLPRSNRSRCPGTRQPGAASLHAASAAVPVRPRRGTAPAGKTADAVPAAAPEQAPRPAPQSRKPRNLEGDLDERRLLCHLQLAQDREARLWRGGKPQDEICDAFEEVVLWLLRLQNTFYFSQSTFNLALTIFGRLLISVKVKEKYLHCATITSLRLAAKVNEEEEFIPQVKDFTKHYGSDYSPNELLRMELAILDRLHWDLYIGTPLDFLTIFHALVVLSWPHVLELLPQRNPSLHVASLTRQLQHCMAGHQLLQFKGSTLALVIITLELERLMPGWCAPISDLLKKAQVGDMQYSCCKELVMQQLRSLQSSSCTDNFVSPAN</sequence>
<evidence type="ECO:0000256" key="1">
    <source>
        <dbReference type="SAM" id="MobiDB-lite"/>
    </source>
</evidence>
<evidence type="ECO:0000303" key="2">
    <source>
    </source>
</evidence>
<evidence type="ECO:0000305" key="3"/>
<dbReference type="EMBL" id="AK131553">
    <property type="protein sequence ID" value="BAD18687.1"/>
    <property type="molecule type" value="mRNA"/>
</dbReference>
<dbReference type="EMBL" id="BC132837">
    <property type="protein sequence ID" value="AAI32838.1"/>
    <property type="molecule type" value="mRNA"/>
</dbReference>
<dbReference type="EMBL" id="BC136836">
    <property type="protein sequence ID" value="AAI36837.1"/>
    <property type="molecule type" value="mRNA"/>
</dbReference>
<dbReference type="EMBL" id="BC144416">
    <property type="protein sequence ID" value="AAI44417.1"/>
    <property type="molecule type" value="mRNA"/>
</dbReference>
<dbReference type="EMBL" id="BC144417">
    <property type="protein sequence ID" value="AAI44418.1"/>
    <property type="molecule type" value="mRNA"/>
</dbReference>
<dbReference type="CCDS" id="CCDS34236.1">
    <molecule id="Q6ZMN8-1"/>
</dbReference>
<dbReference type="CCDS" id="CCDS75297.1">
    <molecule id="Q6ZMN8-2"/>
</dbReference>
<dbReference type="RefSeq" id="NP_001034869.1">
    <molecule id="Q6ZMN8-1"/>
    <property type="nucleotide sequence ID" value="NM_001039780.4"/>
</dbReference>
<dbReference type="RefSeq" id="NP_001274181.1">
    <molecule id="Q6ZMN8-2"/>
    <property type="nucleotide sequence ID" value="NM_001287252.2"/>
</dbReference>
<dbReference type="RefSeq" id="NP_001274182.1">
    <molecule id="Q6ZMN8-3"/>
    <property type="nucleotide sequence ID" value="NM_001287253.2"/>
</dbReference>
<dbReference type="SMR" id="Q6ZMN8"/>
<dbReference type="BioGRID" id="570168">
    <property type="interactions" value="71"/>
</dbReference>
<dbReference type="FunCoup" id="Q6ZMN8">
    <property type="interactions" value="113"/>
</dbReference>
<dbReference type="IntAct" id="Q6ZMN8">
    <property type="interactions" value="3"/>
</dbReference>
<dbReference type="STRING" id="9606.ENSP00000478257"/>
<dbReference type="GlyGen" id="Q6ZMN8">
    <property type="glycosylation" value="1 site, 1 O-linked glycan (1 site)"/>
</dbReference>
<dbReference type="iPTMnet" id="Q6ZMN8"/>
<dbReference type="PhosphoSitePlus" id="Q6ZMN8"/>
<dbReference type="BioMuta" id="CCNI2"/>
<dbReference type="DMDM" id="74749548"/>
<dbReference type="MassIVE" id="Q6ZMN8"/>
<dbReference type="PaxDb" id="9606-ENSP00000478257"/>
<dbReference type="PeptideAtlas" id="Q6ZMN8"/>
<dbReference type="ProteomicsDB" id="67895">
    <molecule id="Q6ZMN8-1"/>
</dbReference>
<dbReference type="Antibodypedia" id="45187">
    <property type="antibodies" value="91 antibodies from 22 providers"/>
</dbReference>
<dbReference type="DNASU" id="645121"/>
<dbReference type="Ensembl" id="ENST00000378731.6">
    <molecule id="Q6ZMN8-1"/>
    <property type="protein sequence ID" value="ENSP00000368005.1"/>
    <property type="gene ID" value="ENSG00000205089.8"/>
</dbReference>
<dbReference type="Ensembl" id="ENST00000614847.1">
    <molecule id="Q6ZMN8-2"/>
    <property type="protein sequence ID" value="ENSP00000478257.1"/>
    <property type="gene ID" value="ENSG00000205089.8"/>
</dbReference>
<dbReference type="GeneID" id="645121"/>
<dbReference type="KEGG" id="hsa:645121"/>
<dbReference type="MANE-Select" id="ENST00000378731.6">
    <property type="protein sequence ID" value="ENSP00000368005.1"/>
    <property type="RefSeq nucleotide sequence ID" value="NM_001039780.4"/>
    <property type="RefSeq protein sequence ID" value="NP_001034869.1"/>
</dbReference>
<dbReference type="UCSC" id="uc003kxq.3">
    <molecule id="Q6ZMN8-1"/>
    <property type="organism name" value="human"/>
</dbReference>
<dbReference type="AGR" id="HGNC:33869"/>
<dbReference type="CTD" id="645121"/>
<dbReference type="DisGeNET" id="645121"/>
<dbReference type="GeneCards" id="CCNI2"/>
<dbReference type="HGNC" id="HGNC:33869">
    <property type="gene designation" value="CCNI2"/>
</dbReference>
<dbReference type="HPA" id="ENSG00000205089">
    <property type="expression patterns" value="Tissue enhanced (brain)"/>
</dbReference>
<dbReference type="MIM" id="620419">
    <property type="type" value="gene"/>
</dbReference>
<dbReference type="neXtProt" id="NX_Q6ZMN8"/>
<dbReference type="OpenTargets" id="ENSG00000205089"/>
<dbReference type="PharmGKB" id="PA162381968"/>
<dbReference type="VEuPathDB" id="HostDB:ENSG00000205089"/>
<dbReference type="eggNOG" id="KOG0653">
    <property type="taxonomic scope" value="Eukaryota"/>
</dbReference>
<dbReference type="GeneTree" id="ENSGT00940000162679"/>
<dbReference type="HOGENOM" id="CLU_065929_0_0_1"/>
<dbReference type="InParanoid" id="Q6ZMN8"/>
<dbReference type="OMA" id="PQRDEIC"/>
<dbReference type="OrthoDB" id="9534382at2759"/>
<dbReference type="PAN-GO" id="Q6ZMN8">
    <property type="GO annotations" value="6 GO annotations based on evolutionary models"/>
</dbReference>
<dbReference type="PhylomeDB" id="Q6ZMN8"/>
<dbReference type="TreeFam" id="TF101007"/>
<dbReference type="PathwayCommons" id="Q6ZMN8"/>
<dbReference type="SignaLink" id="Q6ZMN8"/>
<dbReference type="BioGRID-ORCS" id="645121">
    <property type="hits" value="10 hits in 1142 CRISPR screens"/>
</dbReference>
<dbReference type="GenomeRNAi" id="645121"/>
<dbReference type="Pharos" id="Q6ZMN8">
    <property type="development level" value="Tdark"/>
</dbReference>
<dbReference type="PRO" id="PR:Q6ZMN8"/>
<dbReference type="Proteomes" id="UP000005640">
    <property type="component" value="Chromosome 5"/>
</dbReference>
<dbReference type="RNAct" id="Q6ZMN8">
    <property type="molecule type" value="protein"/>
</dbReference>
<dbReference type="Bgee" id="ENSG00000205089">
    <property type="expression patterns" value="Expressed in primary visual cortex and 95 other cell types or tissues"/>
</dbReference>
<dbReference type="GO" id="GO:0000307">
    <property type="term" value="C:cyclin-dependent protein kinase holoenzyme complex"/>
    <property type="evidence" value="ECO:0000318"/>
    <property type="project" value="GO_Central"/>
</dbReference>
<dbReference type="GO" id="GO:0005737">
    <property type="term" value="C:cytoplasm"/>
    <property type="evidence" value="ECO:0000318"/>
    <property type="project" value="GO_Central"/>
</dbReference>
<dbReference type="GO" id="GO:0005634">
    <property type="term" value="C:nucleus"/>
    <property type="evidence" value="ECO:0000318"/>
    <property type="project" value="GO_Central"/>
</dbReference>
<dbReference type="GO" id="GO:0016538">
    <property type="term" value="F:cyclin-dependent protein serine/threonine kinase regulator activity"/>
    <property type="evidence" value="ECO:0000318"/>
    <property type="project" value="GO_Central"/>
</dbReference>
<dbReference type="GO" id="GO:0000082">
    <property type="term" value="P:G1/S transition of mitotic cell cycle"/>
    <property type="evidence" value="ECO:0000318"/>
    <property type="project" value="GO_Central"/>
</dbReference>
<dbReference type="FunFam" id="1.10.472.10:FF:000127">
    <property type="entry name" value="Cyclin I family member 2"/>
    <property type="match status" value="1"/>
</dbReference>
<dbReference type="Gene3D" id="1.10.472.10">
    <property type="entry name" value="Cyclin-like"/>
    <property type="match status" value="2"/>
</dbReference>
<dbReference type="InterPro" id="IPR039361">
    <property type="entry name" value="Cyclin"/>
</dbReference>
<dbReference type="InterPro" id="IPR013763">
    <property type="entry name" value="Cyclin-like_dom"/>
</dbReference>
<dbReference type="InterPro" id="IPR036915">
    <property type="entry name" value="Cyclin-like_sf"/>
</dbReference>
<dbReference type="InterPro" id="IPR006671">
    <property type="entry name" value="Cyclin_N"/>
</dbReference>
<dbReference type="PANTHER" id="PTHR10177">
    <property type="entry name" value="CYCLINS"/>
    <property type="match status" value="1"/>
</dbReference>
<dbReference type="Pfam" id="PF00134">
    <property type="entry name" value="Cyclin_N"/>
    <property type="match status" value="1"/>
</dbReference>
<dbReference type="SMART" id="SM00385">
    <property type="entry name" value="CYCLIN"/>
    <property type="match status" value="1"/>
</dbReference>
<dbReference type="SUPFAM" id="SSF47954">
    <property type="entry name" value="Cyclin-like"/>
    <property type="match status" value="1"/>
</dbReference>
<comment type="alternative products">
    <event type="alternative splicing"/>
    <isoform>
        <id>Q6ZMN8-1</id>
        <name>1</name>
        <sequence type="displayed"/>
    </isoform>
    <isoform>
        <id>Q6ZMN8-2</id>
        <name>2</name>
        <sequence type="described" ref="VSP_057180"/>
    </isoform>
    <isoform>
        <id>Q6ZMN8-3</id>
        <name>3</name>
        <sequence type="described" ref="VSP_057179"/>
    </isoform>
</comment>
<comment type="similarity">
    <text evidence="3">Belongs to the cyclin family.</text>
</comment>
<organism>
    <name type="scientific">Homo sapiens</name>
    <name type="common">Human</name>
    <dbReference type="NCBI Taxonomy" id="9606"/>
    <lineage>
        <taxon>Eukaryota</taxon>
        <taxon>Metazoa</taxon>
        <taxon>Chordata</taxon>
        <taxon>Craniata</taxon>
        <taxon>Vertebrata</taxon>
        <taxon>Euteleostomi</taxon>
        <taxon>Mammalia</taxon>
        <taxon>Eutheria</taxon>
        <taxon>Euarchontoglires</taxon>
        <taxon>Primates</taxon>
        <taxon>Haplorrhini</taxon>
        <taxon>Catarrhini</taxon>
        <taxon>Hominidae</taxon>
        <taxon>Homo</taxon>
    </lineage>
</organism>
<name>CCNI2_HUMAN</name>
<gene>
    <name type="primary">CCNI2</name>
</gene>
<keyword id="KW-0025">Alternative splicing</keyword>
<keyword id="KW-0195">Cyclin</keyword>
<keyword id="KW-1267">Proteomics identification</keyword>
<keyword id="KW-1185">Reference proteome</keyword>
<feature type="chain" id="PRO_0000335821" description="Cyclin-I2">
    <location>
        <begin position="1"/>
        <end position="369"/>
    </location>
</feature>
<feature type="region of interest" description="Disordered" evidence="1">
    <location>
        <begin position="1"/>
        <end position="116"/>
    </location>
</feature>
<feature type="compositionally biased region" description="Low complexity" evidence="1">
    <location>
        <begin position="64"/>
        <end position="76"/>
    </location>
</feature>
<feature type="compositionally biased region" description="Low complexity" evidence="1">
    <location>
        <begin position="83"/>
        <end position="101"/>
    </location>
</feature>
<feature type="splice variant" id="VSP_057179" description="In isoform 3." evidence="2">
    <original>Q</original>
    <variation>QQ</variation>
    <location>
        <position position="143"/>
    </location>
</feature>
<feature type="splice variant" id="VSP_057180" description="In isoform 2." evidence="2">
    <original>I</original>
    <variation>IEKYGVFCSNIKNHGLQ</variation>
    <location>
        <position position="258"/>
    </location>
</feature>
<feature type="sequence variant" id="VAR_043471" description="In dbSNP:rs803056.">
    <original>A</original>
    <variation>P</variation>
    <location>
        <position position="91"/>
    </location>
</feature>
<reference key="1">
    <citation type="journal article" date="2004" name="Nat. Genet.">
        <title>Complete sequencing and characterization of 21,243 full-length human cDNAs.</title>
        <authorList>
            <person name="Ota T."/>
            <person name="Suzuki Y."/>
            <person name="Nishikawa T."/>
            <person name="Otsuki T."/>
            <person name="Sugiyama T."/>
            <person name="Irie R."/>
            <person name="Wakamatsu A."/>
            <person name="Hayashi K."/>
            <person name="Sato H."/>
            <person name="Nagai K."/>
            <person name="Kimura K."/>
            <person name="Makita H."/>
            <person name="Sekine M."/>
            <person name="Obayashi M."/>
            <person name="Nishi T."/>
            <person name="Shibahara T."/>
            <person name="Tanaka T."/>
            <person name="Ishii S."/>
            <person name="Yamamoto J."/>
            <person name="Saito K."/>
            <person name="Kawai Y."/>
            <person name="Isono Y."/>
            <person name="Nakamura Y."/>
            <person name="Nagahari K."/>
            <person name="Murakami K."/>
            <person name="Yasuda T."/>
            <person name="Iwayanagi T."/>
            <person name="Wagatsuma M."/>
            <person name="Shiratori A."/>
            <person name="Sudo H."/>
            <person name="Hosoiri T."/>
            <person name="Kaku Y."/>
            <person name="Kodaira H."/>
            <person name="Kondo H."/>
            <person name="Sugawara M."/>
            <person name="Takahashi M."/>
            <person name="Kanda K."/>
            <person name="Yokoi T."/>
            <person name="Furuya T."/>
            <person name="Kikkawa E."/>
            <person name="Omura Y."/>
            <person name="Abe K."/>
            <person name="Kamihara K."/>
            <person name="Katsuta N."/>
            <person name="Sato K."/>
            <person name="Tanikawa M."/>
            <person name="Yamazaki M."/>
            <person name="Ninomiya K."/>
            <person name="Ishibashi T."/>
            <person name="Yamashita H."/>
            <person name="Murakawa K."/>
            <person name="Fujimori K."/>
            <person name="Tanai H."/>
            <person name="Kimata M."/>
            <person name="Watanabe M."/>
            <person name="Hiraoka S."/>
            <person name="Chiba Y."/>
            <person name="Ishida S."/>
            <person name="Ono Y."/>
            <person name="Takiguchi S."/>
            <person name="Watanabe S."/>
            <person name="Yosida M."/>
            <person name="Hotuta T."/>
            <person name="Kusano J."/>
            <person name="Kanehori K."/>
            <person name="Takahashi-Fujii A."/>
            <person name="Hara H."/>
            <person name="Tanase T.-O."/>
            <person name="Nomura Y."/>
            <person name="Togiya S."/>
            <person name="Komai F."/>
            <person name="Hara R."/>
            <person name="Takeuchi K."/>
            <person name="Arita M."/>
            <person name="Imose N."/>
            <person name="Musashino K."/>
            <person name="Yuuki H."/>
            <person name="Oshima A."/>
            <person name="Sasaki N."/>
            <person name="Aotsuka S."/>
            <person name="Yoshikawa Y."/>
            <person name="Matsunawa H."/>
            <person name="Ichihara T."/>
            <person name="Shiohata N."/>
            <person name="Sano S."/>
            <person name="Moriya S."/>
            <person name="Momiyama H."/>
            <person name="Satoh N."/>
            <person name="Takami S."/>
            <person name="Terashima Y."/>
            <person name="Suzuki O."/>
            <person name="Nakagawa S."/>
            <person name="Senoh A."/>
            <person name="Mizoguchi H."/>
            <person name="Goto Y."/>
            <person name="Shimizu F."/>
            <person name="Wakebe H."/>
            <person name="Hishigaki H."/>
            <person name="Watanabe T."/>
            <person name="Sugiyama A."/>
            <person name="Takemoto M."/>
            <person name="Kawakami B."/>
            <person name="Yamazaki M."/>
            <person name="Watanabe K."/>
            <person name="Kumagai A."/>
            <person name="Itakura S."/>
            <person name="Fukuzumi Y."/>
            <person name="Fujimori Y."/>
            <person name="Komiyama M."/>
            <person name="Tashiro H."/>
            <person name="Tanigami A."/>
            <person name="Fujiwara T."/>
            <person name="Ono T."/>
            <person name="Yamada K."/>
            <person name="Fujii Y."/>
            <person name="Ozaki K."/>
            <person name="Hirao M."/>
            <person name="Ohmori Y."/>
            <person name="Kawabata A."/>
            <person name="Hikiji T."/>
            <person name="Kobatake N."/>
            <person name="Inagaki H."/>
            <person name="Ikema Y."/>
            <person name="Okamoto S."/>
            <person name="Okitani R."/>
            <person name="Kawakami T."/>
            <person name="Noguchi S."/>
            <person name="Itoh T."/>
            <person name="Shigeta K."/>
            <person name="Senba T."/>
            <person name="Matsumura K."/>
            <person name="Nakajima Y."/>
            <person name="Mizuno T."/>
            <person name="Morinaga M."/>
            <person name="Sasaki M."/>
            <person name="Togashi T."/>
            <person name="Oyama M."/>
            <person name="Hata H."/>
            <person name="Watanabe M."/>
            <person name="Komatsu T."/>
            <person name="Mizushima-Sugano J."/>
            <person name="Satoh T."/>
            <person name="Shirai Y."/>
            <person name="Takahashi Y."/>
            <person name="Nakagawa K."/>
            <person name="Okumura K."/>
            <person name="Nagase T."/>
            <person name="Nomura N."/>
            <person name="Kikuchi H."/>
            <person name="Masuho Y."/>
            <person name="Yamashita R."/>
            <person name="Nakai K."/>
            <person name="Yada T."/>
            <person name="Nakamura Y."/>
            <person name="Ohara O."/>
            <person name="Isogai T."/>
            <person name="Sugano S."/>
        </authorList>
    </citation>
    <scope>NUCLEOTIDE SEQUENCE [LARGE SCALE MRNA] (ISOFORM 1)</scope>
    <source>
        <tissue>Mammary gland</tissue>
    </source>
</reference>
<reference key="2">
    <citation type="journal article" date="2004" name="Genome Res.">
        <title>The status, quality, and expansion of the NIH full-length cDNA project: the Mammalian Gene Collection (MGC).</title>
        <authorList>
            <consortium name="The MGC Project Team"/>
        </authorList>
    </citation>
    <scope>NUCLEOTIDE SEQUENCE [LARGE SCALE MRNA] (ISOFORMS 1; 2 AND 3)</scope>
    <source>
        <tissue>Brain</tissue>
    </source>
</reference>
<protein>
    <recommendedName>
        <fullName>Cyclin-I2</fullName>
    </recommendedName>
</protein>